<evidence type="ECO:0000255" key="1">
    <source>
        <dbReference type="HAMAP-Rule" id="MF_00121"/>
    </source>
</evidence>
<proteinExistence type="inferred from homology"/>
<keyword id="KW-0067">ATP-binding</keyword>
<keyword id="KW-0436">Ligase</keyword>
<keyword id="KW-0547">Nucleotide-binding</keyword>
<keyword id="KW-0648">Protein biosynthesis</keyword>
<comment type="function">
    <text evidence="1">Allows the formation of correctly charged Asn-tRNA(Asn) or Gln-tRNA(Gln) through the transamidation of misacylated Asp-tRNA(Asn) or Glu-tRNA(Gln) in organisms which lack either or both of asparaginyl-tRNA or glutaminyl-tRNA synthetases. The reaction takes place in the presence of glutamine and ATP through an activated phospho-Asp-tRNA(Asn) or phospho-Glu-tRNA(Gln).</text>
</comment>
<comment type="catalytic activity">
    <reaction evidence="1">
        <text>L-glutamyl-tRNA(Gln) + L-glutamine + ATP + H2O = L-glutaminyl-tRNA(Gln) + L-glutamate + ADP + phosphate + H(+)</text>
        <dbReference type="Rhea" id="RHEA:17521"/>
        <dbReference type="Rhea" id="RHEA-COMP:9681"/>
        <dbReference type="Rhea" id="RHEA-COMP:9684"/>
        <dbReference type="ChEBI" id="CHEBI:15377"/>
        <dbReference type="ChEBI" id="CHEBI:15378"/>
        <dbReference type="ChEBI" id="CHEBI:29985"/>
        <dbReference type="ChEBI" id="CHEBI:30616"/>
        <dbReference type="ChEBI" id="CHEBI:43474"/>
        <dbReference type="ChEBI" id="CHEBI:58359"/>
        <dbReference type="ChEBI" id="CHEBI:78520"/>
        <dbReference type="ChEBI" id="CHEBI:78521"/>
        <dbReference type="ChEBI" id="CHEBI:456216"/>
    </reaction>
</comment>
<comment type="catalytic activity">
    <reaction evidence="1">
        <text>L-aspartyl-tRNA(Asn) + L-glutamine + ATP + H2O = L-asparaginyl-tRNA(Asn) + L-glutamate + ADP + phosphate + 2 H(+)</text>
        <dbReference type="Rhea" id="RHEA:14513"/>
        <dbReference type="Rhea" id="RHEA-COMP:9674"/>
        <dbReference type="Rhea" id="RHEA-COMP:9677"/>
        <dbReference type="ChEBI" id="CHEBI:15377"/>
        <dbReference type="ChEBI" id="CHEBI:15378"/>
        <dbReference type="ChEBI" id="CHEBI:29985"/>
        <dbReference type="ChEBI" id="CHEBI:30616"/>
        <dbReference type="ChEBI" id="CHEBI:43474"/>
        <dbReference type="ChEBI" id="CHEBI:58359"/>
        <dbReference type="ChEBI" id="CHEBI:78515"/>
        <dbReference type="ChEBI" id="CHEBI:78516"/>
        <dbReference type="ChEBI" id="CHEBI:456216"/>
    </reaction>
</comment>
<comment type="subunit">
    <text evidence="1">Heterotrimer of A, B and C subunits.</text>
</comment>
<comment type="similarity">
    <text evidence="1">Belongs to the GatB/GatE family. GatB subfamily.</text>
</comment>
<sequence>MAKAELMDYDEAIEMFEPVLGFEVHVELNTRTKMFSDAPNFFGGEPNTNITPVDLGLPGSLPVVNEQAVKHSISLGLALGCEIAPSSRFARKNYFYPDLAKNYQISQFDEPIAFRGSVEVEMPDGRIVTVPIERAHMEEDAGKLTHVGGATGRIQGADHSLVDYNRAGVPLVEIVTDIIYGAEGEAPELAKAYVSTIRDIVVALGISDAKMERGNLRCDANISLSPRGSGKLGTRTETKNVNSLRSVERAIRYEIQRQAAILAAGGTITQETRHWHEDTGRTSAGRPKSDADDYRYFPEPDLLPVQPSAELIEELRAALPEAPAIRRRRLKAEWGFTDLEFQDVVNSGLLTELVDTVEAGAAPQAARKWWTGEIARIANARGVDAATLISPTQVASVIELVEAGTLTNRLARDVIEGVIDGEGTAQEVVDARGLAVVSDDGPLIEAIDAALQAQPDVLAKIRDGKVQAAGAVIGAVMKAMRGQADAARVRELVLERAQAS</sequence>
<gene>
    <name evidence="1" type="primary">gatB</name>
    <name type="ordered locus">CMM_1409</name>
</gene>
<reference key="1">
    <citation type="journal article" date="2008" name="J. Bacteriol.">
        <title>The genome sequence of the tomato-pathogenic actinomycete Clavibacter michiganensis subsp. michiganensis NCPPB382 reveals a large island involved in pathogenicity.</title>
        <authorList>
            <person name="Gartemann K.-H."/>
            <person name="Abt B."/>
            <person name="Bekel T."/>
            <person name="Burger A."/>
            <person name="Engemann J."/>
            <person name="Fluegel M."/>
            <person name="Gaigalat L."/>
            <person name="Goesmann A."/>
            <person name="Graefen I."/>
            <person name="Kalinowski J."/>
            <person name="Kaup O."/>
            <person name="Kirchner O."/>
            <person name="Krause L."/>
            <person name="Linke B."/>
            <person name="McHardy A."/>
            <person name="Meyer F."/>
            <person name="Pohle S."/>
            <person name="Rueckert C."/>
            <person name="Schneiker S."/>
            <person name="Zellermann E.-M."/>
            <person name="Puehler A."/>
            <person name="Eichenlaub R."/>
            <person name="Kaiser O."/>
            <person name="Bartels D."/>
        </authorList>
    </citation>
    <scope>NUCLEOTIDE SEQUENCE [LARGE SCALE GENOMIC DNA]</scope>
    <source>
        <strain>NCPPB 382</strain>
    </source>
</reference>
<accession>A5CQV0</accession>
<dbReference type="EC" id="6.3.5.-" evidence="1"/>
<dbReference type="EMBL" id="AM711867">
    <property type="protein sequence ID" value="CAN01454.1"/>
    <property type="molecule type" value="Genomic_DNA"/>
</dbReference>
<dbReference type="RefSeq" id="WP_012038095.1">
    <property type="nucleotide sequence ID" value="NC_009480.1"/>
</dbReference>
<dbReference type="SMR" id="A5CQV0"/>
<dbReference type="KEGG" id="cmi:CMM_1409"/>
<dbReference type="eggNOG" id="COG0064">
    <property type="taxonomic scope" value="Bacteria"/>
</dbReference>
<dbReference type="HOGENOM" id="CLU_019240_0_0_11"/>
<dbReference type="OrthoDB" id="9804078at2"/>
<dbReference type="Proteomes" id="UP000001564">
    <property type="component" value="Chromosome"/>
</dbReference>
<dbReference type="GO" id="GO:0050566">
    <property type="term" value="F:asparaginyl-tRNA synthase (glutamine-hydrolyzing) activity"/>
    <property type="evidence" value="ECO:0007669"/>
    <property type="project" value="RHEA"/>
</dbReference>
<dbReference type="GO" id="GO:0005524">
    <property type="term" value="F:ATP binding"/>
    <property type="evidence" value="ECO:0007669"/>
    <property type="project" value="UniProtKB-KW"/>
</dbReference>
<dbReference type="GO" id="GO:0050567">
    <property type="term" value="F:glutaminyl-tRNA synthase (glutamine-hydrolyzing) activity"/>
    <property type="evidence" value="ECO:0007669"/>
    <property type="project" value="UniProtKB-UniRule"/>
</dbReference>
<dbReference type="GO" id="GO:0070681">
    <property type="term" value="P:glutaminyl-tRNAGln biosynthesis via transamidation"/>
    <property type="evidence" value="ECO:0007669"/>
    <property type="project" value="TreeGrafter"/>
</dbReference>
<dbReference type="GO" id="GO:0006412">
    <property type="term" value="P:translation"/>
    <property type="evidence" value="ECO:0007669"/>
    <property type="project" value="UniProtKB-UniRule"/>
</dbReference>
<dbReference type="Gene3D" id="1.10.10.410">
    <property type="match status" value="1"/>
</dbReference>
<dbReference type="HAMAP" id="MF_00121">
    <property type="entry name" value="GatB"/>
    <property type="match status" value="1"/>
</dbReference>
<dbReference type="InterPro" id="IPR017959">
    <property type="entry name" value="Asn/Gln-tRNA_amidoTrfase_suB/E"/>
</dbReference>
<dbReference type="InterPro" id="IPR006075">
    <property type="entry name" value="Asn/Gln-tRNA_Trfase_suB/E_cat"/>
</dbReference>
<dbReference type="InterPro" id="IPR018027">
    <property type="entry name" value="Asn/Gln_amidotransferase"/>
</dbReference>
<dbReference type="InterPro" id="IPR003789">
    <property type="entry name" value="Asn/Gln_tRNA_amidoTrase-B-like"/>
</dbReference>
<dbReference type="InterPro" id="IPR004413">
    <property type="entry name" value="GatB"/>
</dbReference>
<dbReference type="InterPro" id="IPR023168">
    <property type="entry name" value="GatB_Yqey_C_2"/>
</dbReference>
<dbReference type="InterPro" id="IPR014746">
    <property type="entry name" value="Gln_synth/guanido_kin_cat_dom"/>
</dbReference>
<dbReference type="NCBIfam" id="TIGR00133">
    <property type="entry name" value="gatB"/>
    <property type="match status" value="1"/>
</dbReference>
<dbReference type="NCBIfam" id="NF004012">
    <property type="entry name" value="PRK05477.1-2"/>
    <property type="match status" value="1"/>
</dbReference>
<dbReference type="NCBIfam" id="NF004013">
    <property type="entry name" value="PRK05477.1-3"/>
    <property type="match status" value="1"/>
</dbReference>
<dbReference type="NCBIfam" id="NF004014">
    <property type="entry name" value="PRK05477.1-4"/>
    <property type="match status" value="1"/>
</dbReference>
<dbReference type="PANTHER" id="PTHR11659">
    <property type="entry name" value="GLUTAMYL-TRNA GLN AMIDOTRANSFERASE SUBUNIT B MITOCHONDRIAL AND PROKARYOTIC PET112-RELATED"/>
    <property type="match status" value="1"/>
</dbReference>
<dbReference type="PANTHER" id="PTHR11659:SF0">
    <property type="entry name" value="GLUTAMYL-TRNA(GLN) AMIDOTRANSFERASE SUBUNIT B, MITOCHONDRIAL"/>
    <property type="match status" value="1"/>
</dbReference>
<dbReference type="Pfam" id="PF02934">
    <property type="entry name" value="GatB_N"/>
    <property type="match status" value="1"/>
</dbReference>
<dbReference type="Pfam" id="PF02637">
    <property type="entry name" value="GatB_Yqey"/>
    <property type="match status" value="1"/>
</dbReference>
<dbReference type="SMART" id="SM00845">
    <property type="entry name" value="GatB_Yqey"/>
    <property type="match status" value="1"/>
</dbReference>
<dbReference type="SUPFAM" id="SSF89095">
    <property type="entry name" value="GatB/YqeY motif"/>
    <property type="match status" value="1"/>
</dbReference>
<dbReference type="SUPFAM" id="SSF55931">
    <property type="entry name" value="Glutamine synthetase/guanido kinase"/>
    <property type="match status" value="1"/>
</dbReference>
<name>GATB_CLAM3</name>
<feature type="chain" id="PRO_1000015957" description="Aspartyl/glutamyl-tRNA(Asn/Gln) amidotransferase subunit B">
    <location>
        <begin position="1"/>
        <end position="500"/>
    </location>
</feature>
<protein>
    <recommendedName>
        <fullName evidence="1">Aspartyl/glutamyl-tRNA(Asn/Gln) amidotransferase subunit B</fullName>
        <shortName evidence="1">Asp/Glu-ADT subunit B</shortName>
        <ecNumber evidence="1">6.3.5.-</ecNumber>
    </recommendedName>
</protein>
<organism>
    <name type="scientific">Clavibacter michiganensis subsp. michiganensis (strain NCPPB 382)</name>
    <dbReference type="NCBI Taxonomy" id="443906"/>
    <lineage>
        <taxon>Bacteria</taxon>
        <taxon>Bacillati</taxon>
        <taxon>Actinomycetota</taxon>
        <taxon>Actinomycetes</taxon>
        <taxon>Micrococcales</taxon>
        <taxon>Microbacteriaceae</taxon>
        <taxon>Clavibacter</taxon>
    </lineage>
</organism>